<gene>
    <name type="ordered locus">XC_4086</name>
</gene>
<reference key="1">
    <citation type="journal article" date="2005" name="Genome Res.">
        <title>Comparative and functional genomic analyses of the pathogenicity of phytopathogen Xanthomonas campestris pv. campestris.</title>
        <authorList>
            <person name="Qian W."/>
            <person name="Jia Y."/>
            <person name="Ren S.-X."/>
            <person name="He Y.-Q."/>
            <person name="Feng J.-X."/>
            <person name="Lu L.-F."/>
            <person name="Sun Q."/>
            <person name="Ying G."/>
            <person name="Tang D.-J."/>
            <person name="Tang H."/>
            <person name="Wu W."/>
            <person name="Hao P."/>
            <person name="Wang L."/>
            <person name="Jiang B.-L."/>
            <person name="Zeng S."/>
            <person name="Gu W.-Y."/>
            <person name="Lu G."/>
            <person name="Rong L."/>
            <person name="Tian Y."/>
            <person name="Yao Z."/>
            <person name="Fu G."/>
            <person name="Chen B."/>
            <person name="Fang R."/>
            <person name="Qiang B."/>
            <person name="Chen Z."/>
            <person name="Zhao G.-P."/>
            <person name="Tang J.-L."/>
            <person name="He C."/>
        </authorList>
    </citation>
    <scope>NUCLEOTIDE SEQUENCE [LARGE SCALE GENOMIC DNA]</scope>
    <source>
        <strain>8004</strain>
    </source>
</reference>
<proteinExistence type="inferred from homology"/>
<protein>
    <recommendedName>
        <fullName evidence="1">YcgL domain-containing protein XC_4086</fullName>
    </recommendedName>
</protein>
<feature type="chain" id="PRO_0000375404" description="YcgL domain-containing protein XC_4086">
    <location>
        <begin position="1"/>
        <end position="86"/>
    </location>
</feature>
<feature type="domain" description="YcgL" evidence="1">
    <location>
        <begin position="1"/>
        <end position="83"/>
    </location>
</feature>
<accession>Q4UP98</accession>
<sequence>MHAYVYKSQRKQDTFVYLATRDDFSVIPADVQARLAPFAFVLDVALTPERRLAQADADTVRAALASHGFYLQLPKTVVLAGECDYD</sequence>
<organism>
    <name type="scientific">Xanthomonas campestris pv. campestris (strain 8004)</name>
    <dbReference type="NCBI Taxonomy" id="314565"/>
    <lineage>
        <taxon>Bacteria</taxon>
        <taxon>Pseudomonadati</taxon>
        <taxon>Pseudomonadota</taxon>
        <taxon>Gammaproteobacteria</taxon>
        <taxon>Lysobacterales</taxon>
        <taxon>Lysobacteraceae</taxon>
        <taxon>Xanthomonas</taxon>
    </lineage>
</organism>
<dbReference type="EMBL" id="CP000050">
    <property type="protein sequence ID" value="AAY51125.1"/>
    <property type="molecule type" value="Genomic_DNA"/>
</dbReference>
<dbReference type="RefSeq" id="WP_011270071.1">
    <property type="nucleotide sequence ID" value="NZ_CP155948.1"/>
</dbReference>
<dbReference type="SMR" id="Q4UP98"/>
<dbReference type="KEGG" id="xcb:XC_4086"/>
<dbReference type="HOGENOM" id="CLU_155118_0_0_6"/>
<dbReference type="Proteomes" id="UP000000420">
    <property type="component" value="Chromosome"/>
</dbReference>
<dbReference type="Gene3D" id="3.10.510.20">
    <property type="entry name" value="YcgL domain"/>
    <property type="match status" value="1"/>
</dbReference>
<dbReference type="HAMAP" id="MF_01866">
    <property type="entry name" value="UPF0745"/>
    <property type="match status" value="1"/>
</dbReference>
<dbReference type="InterPro" id="IPR038068">
    <property type="entry name" value="YcgL-like_sf"/>
</dbReference>
<dbReference type="InterPro" id="IPR027354">
    <property type="entry name" value="YcgL_dom"/>
</dbReference>
<dbReference type="PANTHER" id="PTHR38109">
    <property type="entry name" value="PROTEIN YCGL"/>
    <property type="match status" value="1"/>
</dbReference>
<dbReference type="PANTHER" id="PTHR38109:SF1">
    <property type="entry name" value="PROTEIN YCGL"/>
    <property type="match status" value="1"/>
</dbReference>
<dbReference type="Pfam" id="PF05166">
    <property type="entry name" value="YcgL"/>
    <property type="match status" value="1"/>
</dbReference>
<dbReference type="SUPFAM" id="SSF160191">
    <property type="entry name" value="YcgL-like"/>
    <property type="match status" value="1"/>
</dbReference>
<dbReference type="PROSITE" id="PS51648">
    <property type="entry name" value="YCGL"/>
    <property type="match status" value="1"/>
</dbReference>
<evidence type="ECO:0000255" key="1">
    <source>
        <dbReference type="HAMAP-Rule" id="MF_01866"/>
    </source>
</evidence>
<name>Y4086_XANC8</name>